<feature type="chain" id="PRO_0000143433" description="Maturase K">
    <location>
        <begin position="1"/>
        <end position="504"/>
    </location>
</feature>
<protein>
    <recommendedName>
        <fullName evidence="1">Maturase K</fullName>
    </recommendedName>
    <alternativeName>
        <fullName evidence="1">Intron maturase</fullName>
    </alternativeName>
</protein>
<evidence type="ECO:0000255" key="1">
    <source>
        <dbReference type="HAMAP-Rule" id="MF_01390"/>
    </source>
</evidence>
<keyword id="KW-0150">Chloroplast</keyword>
<keyword id="KW-0507">mRNA processing</keyword>
<keyword id="KW-0934">Plastid</keyword>
<keyword id="KW-0694">RNA-binding</keyword>
<keyword id="KW-0819">tRNA processing</keyword>
<comment type="function">
    <text evidence="1">Usually encoded in the trnK tRNA gene intron. Probably assists in splicing its own and other chloroplast group II introns.</text>
</comment>
<comment type="subcellular location">
    <subcellularLocation>
        <location>Plastid</location>
        <location>Chloroplast</location>
    </subcellularLocation>
</comment>
<comment type="similarity">
    <text evidence="1">Belongs to the intron maturase 2 family. MatK subfamily.</text>
</comment>
<reference key="1">
    <citation type="journal article" date="2002" name="Mol. Phylogenet. Evol.">
        <title>Phylogenetics of asterids based on 3 coding and 3 non-coding chloroplast DNA markers and the utility of non-coding DNA at higher taxonomic levels.</title>
        <authorList>
            <person name="Bremer B."/>
            <person name="Bremer K."/>
            <person name="Heidari N."/>
            <person name="Erixon P."/>
            <person name="Olmstead R.G."/>
            <person name="Anderberg A.A."/>
            <person name="Kallersjo M."/>
            <person name="Barkhordarian E."/>
        </authorList>
    </citation>
    <scope>NUCLEOTIDE SEQUENCE [GENOMIC DNA]</scope>
</reference>
<proteinExistence type="inferred from homology"/>
<accession>Q8M9L8</accession>
<name>MATK_IMPCA</name>
<organism>
    <name type="scientific">Impatiens capensis</name>
    <name type="common">Spotted jewelweed</name>
    <name type="synonym">Impatiens biflora</name>
    <dbReference type="NCBI Taxonomy" id="55378"/>
    <lineage>
        <taxon>Eukaryota</taxon>
        <taxon>Viridiplantae</taxon>
        <taxon>Streptophyta</taxon>
        <taxon>Embryophyta</taxon>
        <taxon>Tracheophyta</taxon>
        <taxon>Spermatophyta</taxon>
        <taxon>Magnoliopsida</taxon>
        <taxon>eudicotyledons</taxon>
        <taxon>Gunneridae</taxon>
        <taxon>Pentapetalae</taxon>
        <taxon>asterids</taxon>
        <taxon>Ericales</taxon>
        <taxon>Balsaminaceae</taxon>
        <taxon>Impatiens</taxon>
        <taxon>Impatiens subgen. Impatiens</taxon>
        <taxon>Impatiens sect. Impatiens</taxon>
    </lineage>
</organism>
<dbReference type="EMBL" id="AJ429280">
    <property type="protein sequence ID" value="CAD22176.1"/>
    <property type="molecule type" value="Genomic_DNA"/>
</dbReference>
<dbReference type="GO" id="GO:0009507">
    <property type="term" value="C:chloroplast"/>
    <property type="evidence" value="ECO:0007669"/>
    <property type="project" value="UniProtKB-SubCell"/>
</dbReference>
<dbReference type="GO" id="GO:0003723">
    <property type="term" value="F:RNA binding"/>
    <property type="evidence" value="ECO:0007669"/>
    <property type="project" value="UniProtKB-KW"/>
</dbReference>
<dbReference type="GO" id="GO:0006397">
    <property type="term" value="P:mRNA processing"/>
    <property type="evidence" value="ECO:0007669"/>
    <property type="project" value="UniProtKB-KW"/>
</dbReference>
<dbReference type="GO" id="GO:0008380">
    <property type="term" value="P:RNA splicing"/>
    <property type="evidence" value="ECO:0007669"/>
    <property type="project" value="UniProtKB-UniRule"/>
</dbReference>
<dbReference type="GO" id="GO:0008033">
    <property type="term" value="P:tRNA processing"/>
    <property type="evidence" value="ECO:0007669"/>
    <property type="project" value="UniProtKB-KW"/>
</dbReference>
<dbReference type="HAMAP" id="MF_01390">
    <property type="entry name" value="MatK"/>
    <property type="match status" value="1"/>
</dbReference>
<dbReference type="InterPro" id="IPR024937">
    <property type="entry name" value="Domain_X"/>
</dbReference>
<dbReference type="InterPro" id="IPR002866">
    <property type="entry name" value="Maturase_MatK"/>
</dbReference>
<dbReference type="InterPro" id="IPR024942">
    <property type="entry name" value="Maturase_MatK_N"/>
</dbReference>
<dbReference type="PANTHER" id="PTHR34811">
    <property type="entry name" value="MATURASE K"/>
    <property type="match status" value="1"/>
</dbReference>
<dbReference type="PANTHER" id="PTHR34811:SF1">
    <property type="entry name" value="MATURASE K"/>
    <property type="match status" value="1"/>
</dbReference>
<dbReference type="Pfam" id="PF01348">
    <property type="entry name" value="Intron_maturas2"/>
    <property type="match status" value="1"/>
</dbReference>
<dbReference type="Pfam" id="PF01824">
    <property type="entry name" value="MatK_N"/>
    <property type="match status" value="1"/>
</dbReference>
<sequence length="504" mass="60696">MEEFKGYLELDRSQQQDFLYSLSFQESIYTLAHDHGLNRLILNADSDKKYSLLIVKCLITQMYQQNLLIFSANEPKQNLFFGHNTDLYCRILFEAFTVILEIPFSLRERPFIERKEMVQFLNLRSIHSIFPFLEDKFSHSNYVVDILLPHSIHLEILVQTLRYWVKDASSLHLLRFFLHQYHNWNSFIIPKQSRFFFXKKKKBQRLFFFLYNSKVCEYESIFIFLRNQSVHLRSISSEAFLERIYFYEKMEYFLEVYAKDFQAFFWLFKDLFMHYVRYQGKCILVSKGTSFLMSKWKYYLVNLWQSCFYMWSQPGRVQINQFSNYSLDFLGYLSSVRRNPSMTWSQMLENSFLISLVIKKFDTRVPTIPLIRSLSKAKFSNILGYPISKASWADFSDSNIIDRFGRIYRNLSHYHSGSPKKTSLYKVKYILRLSCVRTLARKHKSKVRSFLKRFGSGLLEEFFMEEEQVLTLNLQKISFTLRRFYGRQIWYLDIFCINDLAKSE</sequence>
<geneLocation type="chloroplast"/>
<gene>
    <name evidence="1" type="primary">matK</name>
</gene>